<accession>A8MHK8</accession>
<name>OBG_ALKOO</name>
<evidence type="ECO:0000255" key="1">
    <source>
        <dbReference type="HAMAP-Rule" id="MF_01454"/>
    </source>
</evidence>
<evidence type="ECO:0000255" key="2">
    <source>
        <dbReference type="PROSITE-ProRule" id="PRU01229"/>
    </source>
</evidence>
<evidence type="ECO:0000255" key="3">
    <source>
        <dbReference type="PROSITE-ProRule" id="PRU01231"/>
    </source>
</evidence>
<sequence length="430" mass="47431">MFIDKAKIYLKAGKGGDGAVAFRREIYVPAGGPAGGDGGKGGNIIFQVDEGMRTLMDFRYQKHYSAENGEDGKNRNMYGKDGTDLVLKVPPGTIVREENTGEIIADLTGSEDQVVVARGGKGGKGNSHFKSSVRQAPRFAIAGERGQELTVVLELKLIADVGLVGFPNVGKSTLLSVVTSAKPKIANYHFTTLTPNLGVVRTKFGDSFVLADIPGLIEGAHEGTGLGHEFLRHVERTKLLIHVLDVAGLEGRDPLEDFEKINQELHLYNEKLAEKPQVVAANKTDIPGAEDNLEKLKAVLSERGIEVFPISAATSQGLDELLSYVSKRLKELEEIEALKADTAPKEEKVYKYEETEDKYHFTVTRENDVYIVEGRFIERLINSTNFDDIDSLSYFQKVLRNRGVIDRLKEAGISEGDLVKMYSVEFEYFN</sequence>
<comment type="function">
    <text evidence="1">An essential GTPase which binds GTP, GDP and possibly (p)ppGpp with moderate affinity, with high nucleotide exchange rates and a fairly low GTP hydrolysis rate. Plays a role in control of the cell cycle, stress response, ribosome biogenesis and in those bacteria that undergo differentiation, in morphogenesis control.</text>
</comment>
<comment type="cofactor">
    <cofactor evidence="1">
        <name>Mg(2+)</name>
        <dbReference type="ChEBI" id="CHEBI:18420"/>
    </cofactor>
</comment>
<comment type="subunit">
    <text evidence="1">Monomer.</text>
</comment>
<comment type="subcellular location">
    <subcellularLocation>
        <location evidence="1">Cytoplasm</location>
    </subcellularLocation>
</comment>
<comment type="similarity">
    <text evidence="1">Belongs to the TRAFAC class OBG-HflX-like GTPase superfamily. OBG GTPase family.</text>
</comment>
<protein>
    <recommendedName>
        <fullName evidence="1">GTPase Obg</fullName>
        <ecNumber evidence="1">3.6.5.-</ecNumber>
    </recommendedName>
    <alternativeName>
        <fullName evidence="1">GTP-binding protein Obg</fullName>
    </alternativeName>
</protein>
<gene>
    <name evidence="1" type="primary">obg</name>
    <name type="ordered locus">Clos_1750</name>
</gene>
<proteinExistence type="inferred from homology"/>
<keyword id="KW-0963">Cytoplasm</keyword>
<keyword id="KW-0342">GTP-binding</keyword>
<keyword id="KW-0378">Hydrolase</keyword>
<keyword id="KW-0460">Magnesium</keyword>
<keyword id="KW-0479">Metal-binding</keyword>
<keyword id="KW-0547">Nucleotide-binding</keyword>
<keyword id="KW-1185">Reference proteome</keyword>
<organism>
    <name type="scientific">Alkaliphilus oremlandii (strain OhILAs)</name>
    <name type="common">Clostridium oremlandii (strain OhILAs)</name>
    <dbReference type="NCBI Taxonomy" id="350688"/>
    <lineage>
        <taxon>Bacteria</taxon>
        <taxon>Bacillati</taxon>
        <taxon>Bacillota</taxon>
        <taxon>Clostridia</taxon>
        <taxon>Peptostreptococcales</taxon>
        <taxon>Natronincolaceae</taxon>
        <taxon>Alkaliphilus</taxon>
    </lineage>
</organism>
<reference key="1">
    <citation type="submission" date="2007-10" db="EMBL/GenBank/DDBJ databases">
        <title>Complete genome of Alkaliphilus oremlandii OhILAs.</title>
        <authorList>
            <person name="Copeland A."/>
            <person name="Lucas S."/>
            <person name="Lapidus A."/>
            <person name="Barry K."/>
            <person name="Detter J.C."/>
            <person name="Glavina del Rio T."/>
            <person name="Hammon N."/>
            <person name="Israni S."/>
            <person name="Dalin E."/>
            <person name="Tice H."/>
            <person name="Pitluck S."/>
            <person name="Chain P."/>
            <person name="Malfatti S."/>
            <person name="Shin M."/>
            <person name="Vergez L."/>
            <person name="Schmutz J."/>
            <person name="Larimer F."/>
            <person name="Land M."/>
            <person name="Hauser L."/>
            <person name="Kyrpides N."/>
            <person name="Mikhailova N."/>
            <person name="Stolz J.F."/>
            <person name="Dawson A."/>
            <person name="Fisher E."/>
            <person name="Crable B."/>
            <person name="Perera E."/>
            <person name="Lisak J."/>
            <person name="Ranganathan M."/>
            <person name="Basu P."/>
            <person name="Richardson P."/>
        </authorList>
    </citation>
    <scope>NUCLEOTIDE SEQUENCE [LARGE SCALE GENOMIC DNA]</scope>
    <source>
        <strain>OhILAs</strain>
    </source>
</reference>
<dbReference type="EC" id="3.6.5.-" evidence="1"/>
<dbReference type="EMBL" id="CP000853">
    <property type="protein sequence ID" value="ABW19290.1"/>
    <property type="molecule type" value="Genomic_DNA"/>
</dbReference>
<dbReference type="RefSeq" id="WP_012159602.1">
    <property type="nucleotide sequence ID" value="NC_009922.1"/>
</dbReference>
<dbReference type="SMR" id="A8MHK8"/>
<dbReference type="STRING" id="350688.Clos_1750"/>
<dbReference type="KEGG" id="aoe:Clos_1750"/>
<dbReference type="eggNOG" id="COG0536">
    <property type="taxonomic scope" value="Bacteria"/>
</dbReference>
<dbReference type="HOGENOM" id="CLU_011747_2_1_9"/>
<dbReference type="OrthoDB" id="9807318at2"/>
<dbReference type="Proteomes" id="UP000000269">
    <property type="component" value="Chromosome"/>
</dbReference>
<dbReference type="GO" id="GO:0005737">
    <property type="term" value="C:cytoplasm"/>
    <property type="evidence" value="ECO:0007669"/>
    <property type="project" value="UniProtKB-SubCell"/>
</dbReference>
<dbReference type="GO" id="GO:0005525">
    <property type="term" value="F:GTP binding"/>
    <property type="evidence" value="ECO:0007669"/>
    <property type="project" value="UniProtKB-UniRule"/>
</dbReference>
<dbReference type="GO" id="GO:0003924">
    <property type="term" value="F:GTPase activity"/>
    <property type="evidence" value="ECO:0007669"/>
    <property type="project" value="UniProtKB-UniRule"/>
</dbReference>
<dbReference type="GO" id="GO:0000287">
    <property type="term" value="F:magnesium ion binding"/>
    <property type="evidence" value="ECO:0007669"/>
    <property type="project" value="InterPro"/>
</dbReference>
<dbReference type="GO" id="GO:0042254">
    <property type="term" value="P:ribosome biogenesis"/>
    <property type="evidence" value="ECO:0007669"/>
    <property type="project" value="UniProtKB-UniRule"/>
</dbReference>
<dbReference type="CDD" id="cd01898">
    <property type="entry name" value="Obg"/>
    <property type="match status" value="1"/>
</dbReference>
<dbReference type="FunFam" id="2.70.210.12:FF:000001">
    <property type="entry name" value="GTPase Obg"/>
    <property type="match status" value="1"/>
</dbReference>
<dbReference type="Gene3D" id="3.30.300.350">
    <property type="entry name" value="GTP-binding protein OBG, C-terminal domain"/>
    <property type="match status" value="1"/>
</dbReference>
<dbReference type="Gene3D" id="2.70.210.12">
    <property type="entry name" value="GTP1/OBG domain"/>
    <property type="match status" value="1"/>
</dbReference>
<dbReference type="Gene3D" id="3.40.50.300">
    <property type="entry name" value="P-loop containing nucleotide triphosphate hydrolases"/>
    <property type="match status" value="1"/>
</dbReference>
<dbReference type="HAMAP" id="MF_01454">
    <property type="entry name" value="GTPase_Obg"/>
    <property type="match status" value="1"/>
</dbReference>
<dbReference type="InterPro" id="IPR031167">
    <property type="entry name" value="G_OBG"/>
</dbReference>
<dbReference type="InterPro" id="IPR006073">
    <property type="entry name" value="GTP-bd"/>
</dbReference>
<dbReference type="InterPro" id="IPR014100">
    <property type="entry name" value="GTP-bd_Obg/CgtA"/>
</dbReference>
<dbReference type="InterPro" id="IPR036346">
    <property type="entry name" value="GTP-bd_prot_GTP1/OBG_C_sf"/>
</dbReference>
<dbReference type="InterPro" id="IPR006074">
    <property type="entry name" value="GTP1-OBG_CS"/>
</dbReference>
<dbReference type="InterPro" id="IPR006169">
    <property type="entry name" value="GTP1_OBG_dom"/>
</dbReference>
<dbReference type="InterPro" id="IPR036726">
    <property type="entry name" value="GTP1_OBG_dom_sf"/>
</dbReference>
<dbReference type="InterPro" id="IPR045086">
    <property type="entry name" value="OBG_GTPase"/>
</dbReference>
<dbReference type="InterPro" id="IPR015349">
    <property type="entry name" value="OCT_dom"/>
</dbReference>
<dbReference type="InterPro" id="IPR027417">
    <property type="entry name" value="P-loop_NTPase"/>
</dbReference>
<dbReference type="InterPro" id="IPR005225">
    <property type="entry name" value="Small_GTP-bd"/>
</dbReference>
<dbReference type="NCBIfam" id="TIGR02729">
    <property type="entry name" value="Obg_CgtA"/>
    <property type="match status" value="1"/>
</dbReference>
<dbReference type="NCBIfam" id="TIGR03595">
    <property type="entry name" value="Obg_CgtA_exten"/>
    <property type="match status" value="1"/>
</dbReference>
<dbReference type="NCBIfam" id="NF008954">
    <property type="entry name" value="PRK12296.1"/>
    <property type="match status" value="1"/>
</dbReference>
<dbReference type="NCBIfam" id="NF008955">
    <property type="entry name" value="PRK12297.1"/>
    <property type="match status" value="1"/>
</dbReference>
<dbReference type="NCBIfam" id="NF008956">
    <property type="entry name" value="PRK12299.1"/>
    <property type="match status" value="1"/>
</dbReference>
<dbReference type="NCBIfam" id="TIGR00231">
    <property type="entry name" value="small_GTP"/>
    <property type="match status" value="1"/>
</dbReference>
<dbReference type="PANTHER" id="PTHR11702">
    <property type="entry name" value="DEVELOPMENTALLY REGULATED GTP-BINDING PROTEIN-RELATED"/>
    <property type="match status" value="1"/>
</dbReference>
<dbReference type="PANTHER" id="PTHR11702:SF31">
    <property type="entry name" value="MITOCHONDRIAL RIBOSOME-ASSOCIATED GTPASE 2"/>
    <property type="match status" value="1"/>
</dbReference>
<dbReference type="Pfam" id="PF09269">
    <property type="entry name" value="DUF1967"/>
    <property type="match status" value="1"/>
</dbReference>
<dbReference type="Pfam" id="PF01018">
    <property type="entry name" value="GTP1_OBG"/>
    <property type="match status" value="1"/>
</dbReference>
<dbReference type="Pfam" id="PF01926">
    <property type="entry name" value="MMR_HSR1"/>
    <property type="match status" value="1"/>
</dbReference>
<dbReference type="PIRSF" id="PIRSF002401">
    <property type="entry name" value="GTP_bd_Obg/CgtA"/>
    <property type="match status" value="1"/>
</dbReference>
<dbReference type="PRINTS" id="PR00326">
    <property type="entry name" value="GTP1OBG"/>
</dbReference>
<dbReference type="SUPFAM" id="SSF102741">
    <property type="entry name" value="Obg GTP-binding protein C-terminal domain"/>
    <property type="match status" value="1"/>
</dbReference>
<dbReference type="SUPFAM" id="SSF82051">
    <property type="entry name" value="Obg GTP-binding protein N-terminal domain"/>
    <property type="match status" value="1"/>
</dbReference>
<dbReference type="SUPFAM" id="SSF52540">
    <property type="entry name" value="P-loop containing nucleoside triphosphate hydrolases"/>
    <property type="match status" value="1"/>
</dbReference>
<dbReference type="PROSITE" id="PS51710">
    <property type="entry name" value="G_OBG"/>
    <property type="match status" value="1"/>
</dbReference>
<dbReference type="PROSITE" id="PS00905">
    <property type="entry name" value="GTP1_OBG"/>
    <property type="match status" value="1"/>
</dbReference>
<dbReference type="PROSITE" id="PS51883">
    <property type="entry name" value="OBG"/>
    <property type="match status" value="1"/>
</dbReference>
<dbReference type="PROSITE" id="PS51881">
    <property type="entry name" value="OCT"/>
    <property type="match status" value="1"/>
</dbReference>
<feature type="chain" id="PRO_0000385686" description="GTPase Obg">
    <location>
        <begin position="1"/>
        <end position="430"/>
    </location>
</feature>
<feature type="domain" description="Obg" evidence="3">
    <location>
        <begin position="1"/>
        <end position="158"/>
    </location>
</feature>
<feature type="domain" description="OBG-type G" evidence="1">
    <location>
        <begin position="159"/>
        <end position="330"/>
    </location>
</feature>
<feature type="domain" description="OCT" evidence="2">
    <location>
        <begin position="351"/>
        <end position="430"/>
    </location>
</feature>
<feature type="binding site" evidence="1">
    <location>
        <begin position="165"/>
        <end position="172"/>
    </location>
    <ligand>
        <name>GTP</name>
        <dbReference type="ChEBI" id="CHEBI:37565"/>
    </ligand>
</feature>
<feature type="binding site" evidence="1">
    <location>
        <position position="172"/>
    </location>
    <ligand>
        <name>Mg(2+)</name>
        <dbReference type="ChEBI" id="CHEBI:18420"/>
    </ligand>
</feature>
<feature type="binding site" evidence="1">
    <location>
        <begin position="190"/>
        <end position="194"/>
    </location>
    <ligand>
        <name>GTP</name>
        <dbReference type="ChEBI" id="CHEBI:37565"/>
    </ligand>
</feature>
<feature type="binding site" evidence="1">
    <location>
        <position position="192"/>
    </location>
    <ligand>
        <name>Mg(2+)</name>
        <dbReference type="ChEBI" id="CHEBI:18420"/>
    </ligand>
</feature>
<feature type="binding site" evidence="1">
    <location>
        <begin position="212"/>
        <end position="215"/>
    </location>
    <ligand>
        <name>GTP</name>
        <dbReference type="ChEBI" id="CHEBI:37565"/>
    </ligand>
</feature>
<feature type="binding site" evidence="1">
    <location>
        <begin position="282"/>
        <end position="285"/>
    </location>
    <ligand>
        <name>GTP</name>
        <dbReference type="ChEBI" id="CHEBI:37565"/>
    </ligand>
</feature>
<feature type="binding site" evidence="1">
    <location>
        <begin position="311"/>
        <end position="313"/>
    </location>
    <ligand>
        <name>GTP</name>
        <dbReference type="ChEBI" id="CHEBI:37565"/>
    </ligand>
</feature>